<name>LIS1_GLOMM</name>
<comment type="function">
    <text evidence="1">Positively regulates the activity of the minus-end directed microtubule motor protein dynein. May enhance dynein-mediated microtubule sliding by targeting dynein to the microtubule plus end. Required for several dynein- and microtubule-dependent processes.</text>
</comment>
<comment type="subcellular location">
    <subcellularLocation>
        <location evidence="1">Cytoplasm</location>
        <location evidence="1">Cytoskeleton</location>
    </subcellularLocation>
    <subcellularLocation>
        <location evidence="1">Cytoplasm</location>
        <location evidence="1">Cytoskeleton</location>
        <location evidence="1">Microtubule organizing center</location>
        <location evidence="1">Centrosome</location>
    </subcellularLocation>
    <text evidence="1">Localizes to the plus end of microtubules and to the centrosome.</text>
</comment>
<comment type="domain">
    <text evidence="1">Dimerization mediated by the LisH domain may be required to activate dynein.</text>
</comment>
<comment type="similarity">
    <text evidence="1">Belongs to the WD repeat LIS1/nudF family.</text>
</comment>
<keyword id="KW-0131">Cell cycle</keyword>
<keyword id="KW-0132">Cell division</keyword>
<keyword id="KW-0175">Coiled coil</keyword>
<keyword id="KW-0963">Cytoplasm</keyword>
<keyword id="KW-0206">Cytoskeleton</keyword>
<keyword id="KW-0493">Microtubule</keyword>
<keyword id="KW-0498">Mitosis</keyword>
<keyword id="KW-0677">Repeat</keyword>
<keyword id="KW-0813">Transport</keyword>
<keyword id="KW-0853">WD repeat</keyword>
<sequence length="411" mass="46497">MKMVLSQRQREELNQAIADYLGSNGYSSALEAFRKEADISGEAERKIVGLLEKKWTSVIRLQKKVMELEAKLSEAEKEVIEGAPSRAKRSPGEWIPRPPEKFSLSGHRASITRVIFHPTYSLMLSASEDAVIKIWDFETGEYERSLKGHTSSVQDIAFDSQGKLLASCSADLSIKLWDFQQSYDCVKTMLGHDHNVSSVAFVPAGDYVLSASRDQTIKMWEVATGYCVKTYSGHREWIRMVRVHMDGNIFASCSIDHSIRIWSINSRDCKAELRAHDHTVECIAWAPDISTTHINEAAGSDNKKGHHQGPFLASGSRDKTIRVWDVGVGLCLFVLTGHDNWVRELTFHPGGKYLVSASDDKTIRVWDLRNKRFMKTLYAHQHFCTSVDFHKKLPYVISGSVDNTVKVWECR</sequence>
<accession>D3TLL6</accession>
<feature type="chain" id="PRO_0000405051" description="Lissencephaly-1 homolog">
    <location>
        <begin position="1"/>
        <end position="411"/>
    </location>
</feature>
<feature type="domain" description="LisH" evidence="1">
    <location>
        <begin position="9"/>
        <end position="41"/>
    </location>
</feature>
<feature type="repeat" description="WD 1">
    <location>
        <begin position="106"/>
        <end position="147"/>
    </location>
</feature>
<feature type="repeat" description="WD 2">
    <location>
        <begin position="149"/>
        <end position="187"/>
    </location>
</feature>
<feature type="repeat" description="WD 3">
    <location>
        <begin position="191"/>
        <end position="230"/>
    </location>
</feature>
<feature type="repeat" description="WD 4">
    <location>
        <begin position="233"/>
        <end position="272"/>
    </location>
</feature>
<feature type="repeat" description="WD 5">
    <location>
        <begin position="275"/>
        <end position="334"/>
    </location>
</feature>
<feature type="repeat" description="WD 6">
    <location>
        <begin position="337"/>
        <end position="376"/>
    </location>
</feature>
<feature type="repeat" description="WD 7">
    <location>
        <begin position="379"/>
        <end position="411"/>
    </location>
</feature>
<feature type="coiled-coil region" evidence="1">
    <location>
        <begin position="56"/>
        <end position="83"/>
    </location>
</feature>
<evidence type="ECO:0000255" key="1">
    <source>
        <dbReference type="HAMAP-Rule" id="MF_03141"/>
    </source>
</evidence>
<proteinExistence type="evidence at transcript level"/>
<dbReference type="EMBL" id="EZ422318">
    <property type="protein sequence ID" value="ADD18594.1"/>
    <property type="molecule type" value="mRNA"/>
</dbReference>
<dbReference type="SMR" id="D3TLL6"/>
<dbReference type="STRING" id="37546.D3TLL6"/>
<dbReference type="EnsemblMetazoa" id="GMOY000875-RA">
    <property type="protein sequence ID" value="GMOY000875-PA"/>
    <property type="gene ID" value="GMOY000875"/>
</dbReference>
<dbReference type="VEuPathDB" id="VectorBase:GMOY000875"/>
<dbReference type="PhylomeDB" id="D3TLL6"/>
<dbReference type="Proteomes" id="UP000092444">
    <property type="component" value="Unassembled WGS sequence"/>
</dbReference>
<dbReference type="GO" id="GO:0005813">
    <property type="term" value="C:centrosome"/>
    <property type="evidence" value="ECO:0007669"/>
    <property type="project" value="UniProtKB-SubCell"/>
</dbReference>
<dbReference type="GO" id="GO:0005737">
    <property type="term" value="C:cytoplasm"/>
    <property type="evidence" value="ECO:0007669"/>
    <property type="project" value="UniProtKB-UniRule"/>
</dbReference>
<dbReference type="GO" id="GO:0005874">
    <property type="term" value="C:microtubule"/>
    <property type="evidence" value="ECO:0007669"/>
    <property type="project" value="UniProtKB-KW"/>
</dbReference>
<dbReference type="GO" id="GO:0005875">
    <property type="term" value="C:microtubule associated complex"/>
    <property type="evidence" value="ECO:0007669"/>
    <property type="project" value="UniProtKB-UniRule"/>
</dbReference>
<dbReference type="GO" id="GO:0046540">
    <property type="term" value="C:U4/U6 x U5 tri-snRNP complex"/>
    <property type="evidence" value="ECO:0007669"/>
    <property type="project" value="TreeGrafter"/>
</dbReference>
<dbReference type="GO" id="GO:0070840">
    <property type="term" value="F:dynein complex binding"/>
    <property type="evidence" value="ECO:0007669"/>
    <property type="project" value="UniProtKB-UniRule"/>
</dbReference>
<dbReference type="GO" id="GO:0030621">
    <property type="term" value="F:U4 snRNA binding"/>
    <property type="evidence" value="ECO:0007669"/>
    <property type="project" value="TreeGrafter"/>
</dbReference>
<dbReference type="GO" id="GO:0017070">
    <property type="term" value="F:U6 snRNA binding"/>
    <property type="evidence" value="ECO:0007669"/>
    <property type="project" value="TreeGrafter"/>
</dbReference>
<dbReference type="GO" id="GO:0051301">
    <property type="term" value="P:cell division"/>
    <property type="evidence" value="ECO:0007669"/>
    <property type="project" value="UniProtKB-KW"/>
</dbReference>
<dbReference type="GO" id="GO:0000132">
    <property type="term" value="P:establishment of mitotic spindle orientation"/>
    <property type="evidence" value="ECO:0007669"/>
    <property type="project" value="UniProtKB-UniRule"/>
</dbReference>
<dbReference type="GO" id="GO:0051012">
    <property type="term" value="P:microtubule sliding"/>
    <property type="evidence" value="ECO:0007669"/>
    <property type="project" value="UniProtKB-UniRule"/>
</dbReference>
<dbReference type="GO" id="GO:0000398">
    <property type="term" value="P:mRNA splicing, via spliceosome"/>
    <property type="evidence" value="ECO:0007669"/>
    <property type="project" value="TreeGrafter"/>
</dbReference>
<dbReference type="CDD" id="cd00200">
    <property type="entry name" value="WD40"/>
    <property type="match status" value="1"/>
</dbReference>
<dbReference type="FunFam" id="2.130.10.10:FF:000342">
    <property type="entry name" value="Nuclear distribution protein PAC1"/>
    <property type="match status" value="1"/>
</dbReference>
<dbReference type="FunFam" id="1.20.960.30:FF:000002">
    <property type="entry name" value="Platelet-activating factor acetylhydrolase ib"/>
    <property type="match status" value="1"/>
</dbReference>
<dbReference type="Gene3D" id="1.20.960.30">
    <property type="match status" value="1"/>
</dbReference>
<dbReference type="Gene3D" id="2.130.10.10">
    <property type="entry name" value="YVTN repeat-like/Quinoprotein amine dehydrogenase"/>
    <property type="match status" value="1"/>
</dbReference>
<dbReference type="HAMAP" id="MF_03141">
    <property type="entry name" value="lis1"/>
    <property type="match status" value="1"/>
</dbReference>
<dbReference type="InterPro" id="IPR017252">
    <property type="entry name" value="Dynein_regulator_LIS1"/>
</dbReference>
<dbReference type="InterPro" id="IPR020472">
    <property type="entry name" value="G-protein_beta_WD-40_rep"/>
</dbReference>
<dbReference type="InterPro" id="IPR037190">
    <property type="entry name" value="LIS1_N"/>
</dbReference>
<dbReference type="InterPro" id="IPR006594">
    <property type="entry name" value="LisH"/>
</dbReference>
<dbReference type="InterPro" id="IPR056795">
    <property type="entry name" value="PAC1-like_LisH-like_dom"/>
</dbReference>
<dbReference type="InterPro" id="IPR015943">
    <property type="entry name" value="WD40/YVTN_repeat-like_dom_sf"/>
</dbReference>
<dbReference type="InterPro" id="IPR019775">
    <property type="entry name" value="WD40_repeat_CS"/>
</dbReference>
<dbReference type="InterPro" id="IPR036322">
    <property type="entry name" value="WD40_repeat_dom_sf"/>
</dbReference>
<dbReference type="InterPro" id="IPR001680">
    <property type="entry name" value="WD40_rpt"/>
</dbReference>
<dbReference type="PANTHER" id="PTHR19846:SF0">
    <property type="entry name" value="PRE-MRNA PROCESSING FACTOR 4"/>
    <property type="match status" value="1"/>
</dbReference>
<dbReference type="PANTHER" id="PTHR19846">
    <property type="entry name" value="WD40 REPEAT PROTEIN"/>
    <property type="match status" value="1"/>
</dbReference>
<dbReference type="Pfam" id="PF24951">
    <property type="entry name" value="LisH_PAC1"/>
    <property type="match status" value="1"/>
</dbReference>
<dbReference type="Pfam" id="PF00400">
    <property type="entry name" value="WD40"/>
    <property type="match status" value="7"/>
</dbReference>
<dbReference type="PIRSF" id="PIRSF037647">
    <property type="entry name" value="Dynein_regulator_Lis1"/>
    <property type="match status" value="1"/>
</dbReference>
<dbReference type="PRINTS" id="PR00320">
    <property type="entry name" value="GPROTEINBRPT"/>
</dbReference>
<dbReference type="SMART" id="SM00667">
    <property type="entry name" value="LisH"/>
    <property type="match status" value="1"/>
</dbReference>
<dbReference type="SMART" id="SM00320">
    <property type="entry name" value="WD40"/>
    <property type="match status" value="7"/>
</dbReference>
<dbReference type="SUPFAM" id="SSF109925">
    <property type="entry name" value="Lissencephaly-1 protein (Lis-1, PAF-AH alpha) N-terminal domain"/>
    <property type="match status" value="1"/>
</dbReference>
<dbReference type="SUPFAM" id="SSF50978">
    <property type="entry name" value="WD40 repeat-like"/>
    <property type="match status" value="1"/>
</dbReference>
<dbReference type="PROSITE" id="PS50896">
    <property type="entry name" value="LISH"/>
    <property type="match status" value="1"/>
</dbReference>
<dbReference type="PROSITE" id="PS00678">
    <property type="entry name" value="WD_REPEATS_1"/>
    <property type="match status" value="6"/>
</dbReference>
<dbReference type="PROSITE" id="PS50082">
    <property type="entry name" value="WD_REPEATS_2"/>
    <property type="match status" value="7"/>
</dbReference>
<dbReference type="PROSITE" id="PS50294">
    <property type="entry name" value="WD_REPEATS_REGION"/>
    <property type="match status" value="1"/>
</dbReference>
<organism>
    <name type="scientific">Glossina morsitans morsitans</name>
    <name type="common">Savannah tsetse fly</name>
    <dbReference type="NCBI Taxonomy" id="37546"/>
    <lineage>
        <taxon>Eukaryota</taxon>
        <taxon>Metazoa</taxon>
        <taxon>Ecdysozoa</taxon>
        <taxon>Arthropoda</taxon>
        <taxon>Hexapoda</taxon>
        <taxon>Insecta</taxon>
        <taxon>Pterygota</taxon>
        <taxon>Neoptera</taxon>
        <taxon>Endopterygota</taxon>
        <taxon>Diptera</taxon>
        <taxon>Brachycera</taxon>
        <taxon>Muscomorpha</taxon>
        <taxon>Hippoboscoidea</taxon>
        <taxon>Glossinidae</taxon>
        <taxon>Glossina</taxon>
    </lineage>
</organism>
<protein>
    <recommendedName>
        <fullName evidence="1">Lissencephaly-1 homolog</fullName>
    </recommendedName>
</protein>
<reference key="1">
    <citation type="journal article" date="2010" name="BMC Genomics">
        <title>An insight into the sialome of Glossina morsitans morsitans.</title>
        <authorList>
            <person name="Alves-Silva J."/>
            <person name="Ribeiro J.M."/>
            <person name="Van Den Abbeele J."/>
            <person name="Attardo G."/>
            <person name="Hao Z."/>
            <person name="Haines L.R."/>
            <person name="Soares M.B."/>
            <person name="Berriman M."/>
            <person name="Aksoy S."/>
            <person name="Lehane M.J."/>
        </authorList>
    </citation>
    <scope>NUCLEOTIDE SEQUENCE [LARGE SCALE MRNA]</scope>
    <source>
        <tissue>Salivary gland</tissue>
    </source>
</reference>